<reference key="1">
    <citation type="journal article" date="2002" name="Nucleic Acids Res.">
        <title>Genome sequence of Shigella flexneri 2a: insights into pathogenicity through comparison with genomes of Escherichia coli K12 and O157.</title>
        <authorList>
            <person name="Jin Q."/>
            <person name="Yuan Z."/>
            <person name="Xu J."/>
            <person name="Wang Y."/>
            <person name="Shen Y."/>
            <person name="Lu W."/>
            <person name="Wang J."/>
            <person name="Liu H."/>
            <person name="Yang J."/>
            <person name="Yang F."/>
            <person name="Zhang X."/>
            <person name="Zhang J."/>
            <person name="Yang G."/>
            <person name="Wu H."/>
            <person name="Qu D."/>
            <person name="Dong J."/>
            <person name="Sun L."/>
            <person name="Xue Y."/>
            <person name="Zhao A."/>
            <person name="Gao Y."/>
            <person name="Zhu J."/>
            <person name="Kan B."/>
            <person name="Ding K."/>
            <person name="Chen S."/>
            <person name="Cheng H."/>
            <person name="Yao Z."/>
            <person name="He B."/>
            <person name="Chen R."/>
            <person name="Ma D."/>
            <person name="Qiang B."/>
            <person name="Wen Y."/>
            <person name="Hou Y."/>
            <person name="Yu J."/>
        </authorList>
    </citation>
    <scope>NUCLEOTIDE SEQUENCE [LARGE SCALE GENOMIC DNA]</scope>
    <source>
        <strain>301 / Serotype 2a</strain>
    </source>
</reference>
<reference key="2">
    <citation type="journal article" date="2003" name="Infect. Immun.">
        <title>Complete genome sequence and comparative genomics of Shigella flexneri serotype 2a strain 2457T.</title>
        <authorList>
            <person name="Wei J."/>
            <person name="Goldberg M.B."/>
            <person name="Burland V."/>
            <person name="Venkatesan M.M."/>
            <person name="Deng W."/>
            <person name="Fournier G."/>
            <person name="Mayhew G.F."/>
            <person name="Plunkett G. III"/>
            <person name="Rose D.J."/>
            <person name="Darling A."/>
            <person name="Mau B."/>
            <person name="Perna N.T."/>
            <person name="Payne S.M."/>
            <person name="Runyen-Janecky L.J."/>
            <person name="Zhou S."/>
            <person name="Schwartz D.C."/>
            <person name="Blattner F.R."/>
        </authorList>
    </citation>
    <scope>NUCLEOTIDE SEQUENCE [LARGE SCALE GENOMIC DNA]</scope>
    <source>
        <strain>ATCC 700930 / 2457T / Serotype 2a</strain>
    </source>
</reference>
<proteinExistence type="inferred from homology"/>
<evidence type="ECO:0000250" key="1">
    <source>
        <dbReference type="UniProtKB" id="P32684"/>
    </source>
</evidence>
<evidence type="ECO:0000255" key="2">
    <source>
        <dbReference type="PROSITE-ProRule" id="PRU00182"/>
    </source>
</evidence>
<evidence type="ECO:0000256" key="3">
    <source>
        <dbReference type="SAM" id="MobiDB-lite"/>
    </source>
</evidence>
<evidence type="ECO:0000305" key="4"/>
<feature type="chain" id="PRO_0000100021" description="Dual-specificity RNA pseudouridine synthase RluF">
    <location>
        <begin position="1"/>
        <end position="290"/>
    </location>
</feature>
<feature type="domain" description="S4 RNA-binding" evidence="2">
    <location>
        <begin position="7"/>
        <end position="72"/>
    </location>
</feature>
<feature type="region of interest" description="Interaction with RNA" evidence="1">
    <location>
        <begin position="105"/>
        <end position="108"/>
    </location>
</feature>
<feature type="region of interest" description="Interaction with RNA" evidence="1">
    <location>
        <begin position="187"/>
        <end position="190"/>
    </location>
</feature>
<feature type="region of interest" description="Disordered" evidence="3">
    <location>
        <begin position="241"/>
        <end position="290"/>
    </location>
</feature>
<feature type="compositionally biased region" description="Basic and acidic residues" evidence="3">
    <location>
        <begin position="261"/>
        <end position="271"/>
    </location>
</feature>
<feature type="active site" description="Nucleophile" evidence="1">
    <location>
        <position position="107"/>
    </location>
</feature>
<dbReference type="EC" id="5.4.99.-" evidence="1"/>
<dbReference type="EC" id="5.4.99.21" evidence="1"/>
<dbReference type="EMBL" id="AE005674">
    <property type="protein sequence ID" value="AAN45520.1"/>
    <property type="molecule type" value="Genomic_DNA"/>
</dbReference>
<dbReference type="EMBL" id="AE014073">
    <property type="protein sequence ID" value="AAP18679.1"/>
    <property type="molecule type" value="Genomic_DNA"/>
</dbReference>
<dbReference type="RefSeq" id="WP_000936346.1">
    <property type="nucleotide sequence ID" value="NZ_WPGW01000087.1"/>
</dbReference>
<dbReference type="SMR" id="Q83IR6"/>
<dbReference type="STRING" id="198214.SF4095"/>
<dbReference type="PaxDb" id="198214-SF4095"/>
<dbReference type="GeneID" id="93777866"/>
<dbReference type="KEGG" id="sfl:SF4095"/>
<dbReference type="KEGG" id="sfx:S3635"/>
<dbReference type="PATRIC" id="fig|198214.7.peg.4826"/>
<dbReference type="HOGENOM" id="CLU_024979_6_1_6"/>
<dbReference type="Proteomes" id="UP000001006">
    <property type="component" value="Chromosome"/>
</dbReference>
<dbReference type="Proteomes" id="UP000002673">
    <property type="component" value="Chromosome"/>
</dbReference>
<dbReference type="GO" id="GO:0160138">
    <property type="term" value="F:23S rRNA pseudouridine(2604) synthase activity"/>
    <property type="evidence" value="ECO:0007669"/>
    <property type="project" value="UniProtKB-EC"/>
</dbReference>
<dbReference type="GO" id="GO:0003723">
    <property type="term" value="F:RNA binding"/>
    <property type="evidence" value="ECO:0007669"/>
    <property type="project" value="UniProtKB-KW"/>
</dbReference>
<dbReference type="GO" id="GO:0000455">
    <property type="term" value="P:enzyme-directed rRNA pseudouridine synthesis"/>
    <property type="evidence" value="ECO:0007669"/>
    <property type="project" value="UniProtKB-ARBA"/>
</dbReference>
<dbReference type="GO" id="GO:0008033">
    <property type="term" value="P:tRNA processing"/>
    <property type="evidence" value="ECO:0007669"/>
    <property type="project" value="UniProtKB-KW"/>
</dbReference>
<dbReference type="CDD" id="cd02554">
    <property type="entry name" value="PseudoU_synth_RluF"/>
    <property type="match status" value="1"/>
</dbReference>
<dbReference type="CDD" id="cd00165">
    <property type="entry name" value="S4"/>
    <property type="match status" value="1"/>
</dbReference>
<dbReference type="FunFam" id="3.10.290.10:FF:000003">
    <property type="entry name" value="Pseudouridine synthase"/>
    <property type="match status" value="1"/>
</dbReference>
<dbReference type="FunFam" id="3.30.70.1560:FF:000002">
    <property type="entry name" value="Pseudouridine synthase"/>
    <property type="match status" value="1"/>
</dbReference>
<dbReference type="Gene3D" id="3.30.70.1560">
    <property type="entry name" value="Alpha-L RNA-binding motif"/>
    <property type="match status" value="1"/>
</dbReference>
<dbReference type="Gene3D" id="3.30.70.580">
    <property type="entry name" value="Pseudouridine synthase I, catalytic domain, N-terminal subdomain"/>
    <property type="match status" value="1"/>
</dbReference>
<dbReference type="Gene3D" id="3.10.290.10">
    <property type="entry name" value="RNA-binding S4 domain"/>
    <property type="match status" value="1"/>
</dbReference>
<dbReference type="InterPro" id="IPR042092">
    <property type="entry name" value="PsdUridine_s_RsuA/RluB/E/F_cat"/>
</dbReference>
<dbReference type="InterPro" id="IPR020103">
    <property type="entry name" value="PsdUridine_synth_cat_dom_sf"/>
</dbReference>
<dbReference type="InterPro" id="IPR006145">
    <property type="entry name" value="PsdUridine_synth_RsuA/RluA"/>
</dbReference>
<dbReference type="InterPro" id="IPR000748">
    <property type="entry name" value="PsdUridine_synth_RsuA/RluB/E/F"/>
</dbReference>
<dbReference type="InterPro" id="IPR018496">
    <property type="entry name" value="PsdUridine_synth_RsuA/RluB_CS"/>
</dbReference>
<dbReference type="InterPro" id="IPR050343">
    <property type="entry name" value="RsuA_PseudoU_synthase"/>
</dbReference>
<dbReference type="InterPro" id="IPR002942">
    <property type="entry name" value="S4_RNA-bd"/>
</dbReference>
<dbReference type="InterPro" id="IPR036986">
    <property type="entry name" value="S4_RNA-bd_sf"/>
</dbReference>
<dbReference type="InterPro" id="IPR020094">
    <property type="entry name" value="TruA/RsuA/RluB/E/F_N"/>
</dbReference>
<dbReference type="NCBIfam" id="NF007784">
    <property type="entry name" value="PRK10475.1"/>
    <property type="match status" value="1"/>
</dbReference>
<dbReference type="NCBIfam" id="TIGR00093">
    <property type="entry name" value="pseudouridine synthase"/>
    <property type="match status" value="1"/>
</dbReference>
<dbReference type="PANTHER" id="PTHR47683">
    <property type="entry name" value="PSEUDOURIDINE SYNTHASE FAMILY PROTEIN-RELATED"/>
    <property type="match status" value="1"/>
</dbReference>
<dbReference type="PANTHER" id="PTHR47683:SF2">
    <property type="entry name" value="RNA-BINDING S4 DOMAIN-CONTAINING PROTEIN"/>
    <property type="match status" value="1"/>
</dbReference>
<dbReference type="Pfam" id="PF00849">
    <property type="entry name" value="PseudoU_synth_2"/>
    <property type="match status" value="1"/>
</dbReference>
<dbReference type="Pfam" id="PF01479">
    <property type="entry name" value="S4"/>
    <property type="match status" value="1"/>
</dbReference>
<dbReference type="SMART" id="SM00363">
    <property type="entry name" value="S4"/>
    <property type="match status" value="1"/>
</dbReference>
<dbReference type="SUPFAM" id="SSF55174">
    <property type="entry name" value="Alpha-L RNA-binding motif"/>
    <property type="match status" value="1"/>
</dbReference>
<dbReference type="SUPFAM" id="SSF55120">
    <property type="entry name" value="Pseudouridine synthase"/>
    <property type="match status" value="1"/>
</dbReference>
<dbReference type="PROSITE" id="PS01149">
    <property type="entry name" value="PSI_RSU"/>
    <property type="match status" value="1"/>
</dbReference>
<dbReference type="PROSITE" id="PS50889">
    <property type="entry name" value="S4"/>
    <property type="match status" value="1"/>
</dbReference>
<gene>
    <name type="primary">rluF</name>
    <name type="ordered locus">SF4095</name>
    <name type="ordered locus">S3635</name>
</gene>
<protein>
    <recommendedName>
        <fullName evidence="1">Dual-specificity RNA pseudouridine synthase RluF</fullName>
        <ecNumber evidence="1">5.4.99.-</ecNumber>
        <ecNumber evidence="1">5.4.99.21</ecNumber>
    </recommendedName>
    <alternativeName>
        <fullName evidence="1">23S rRNA pseudouridine(2604) synthase</fullName>
    </alternativeName>
    <alternativeName>
        <fullName evidence="1">Ribosomal large subunit pseudouridine synthase F</fullName>
    </alternativeName>
    <alternativeName>
        <fullName evidence="1">rRNA pseudouridylate synthase F</fullName>
    </alternativeName>
    <alternativeName>
        <fullName evidence="1">rRNA-uridine isomerase F</fullName>
    </alternativeName>
    <alternativeName>
        <fullName evidence="1">tRNA(Tyr) pseudouridine(35) synthase</fullName>
    </alternativeName>
</protein>
<keyword id="KW-0413">Isomerase</keyword>
<keyword id="KW-1185">Reference proteome</keyword>
<keyword id="KW-0694">RNA-binding</keyword>
<keyword id="KW-0698">rRNA processing</keyword>
<keyword id="KW-0819">tRNA processing</keyword>
<comment type="function">
    <text evidence="1">Dual specificity enzyme that catalyzes the synthesis of pseudouridine from uracil-2604 in 23S ribosomal RNA and from uracil-35 in the anticodon of tRNA(Tyr).</text>
</comment>
<comment type="catalytic activity">
    <reaction evidence="1">
        <text>uridine(2604) in 23S rRNA = pseudouridine(2604) in 23S rRNA</text>
        <dbReference type="Rhea" id="RHEA:38875"/>
        <dbReference type="Rhea" id="RHEA-COMP:10093"/>
        <dbReference type="Rhea" id="RHEA-COMP:10094"/>
        <dbReference type="ChEBI" id="CHEBI:65314"/>
        <dbReference type="ChEBI" id="CHEBI:65315"/>
        <dbReference type="EC" id="5.4.99.21"/>
    </reaction>
</comment>
<comment type="catalytic activity">
    <reaction evidence="1">
        <text>uridine(35) in tRNA(Tyr) = pseudouridine(35) in tRNA(Tyr)</text>
        <dbReference type="Rhea" id="RHEA:60556"/>
        <dbReference type="Rhea" id="RHEA-COMP:15607"/>
        <dbReference type="Rhea" id="RHEA-COMP:15608"/>
        <dbReference type="ChEBI" id="CHEBI:65314"/>
        <dbReference type="ChEBI" id="CHEBI:65315"/>
    </reaction>
</comment>
<comment type="subunit">
    <text evidence="1">Monomer.</text>
</comment>
<comment type="similarity">
    <text evidence="4">Belongs to the pseudouridine synthase RsuA family.</text>
</comment>
<accession>Q83IR6</accession>
<organism>
    <name type="scientific">Shigella flexneri</name>
    <dbReference type="NCBI Taxonomy" id="623"/>
    <lineage>
        <taxon>Bacteria</taxon>
        <taxon>Pseudomonadati</taxon>
        <taxon>Pseudomonadota</taxon>
        <taxon>Gammaproteobacteria</taxon>
        <taxon>Enterobacterales</taxon>
        <taxon>Enterobacteriaceae</taxon>
        <taxon>Shigella</taxon>
    </lineage>
</organism>
<name>RLUF_SHIFL</name>
<sequence length="290" mass="32418">MLPDSSVRLNKYISESGICSRREADRYIEQGNVFLNGKRATIGDQVKPGDIVKVNGQLIEPREAEDLVLIALNKPVGIVSTTEDGERDNIVDFVNHSKRVFPIGRLDKDSQGLIFLTNHGDLVNKILRAGNDHEKEYLVTVDKPITDEFIRGMGAGVPILGTVTKKCKVKKEAPFVFRITLVQGLNRQIRRMCEHFGYEVKKLERTRIMNVSLSGIPLGEWRDLTDDELIDLFKLIENSSSEAKPKAKAKPKTAGIKRPVVKMEKTAEKGGRPASNGKRFTSPGRKKKGR</sequence>